<protein>
    <recommendedName>
        <fullName>Alpha-glucan phosphorylase, H isozyme</fullName>
        <ecNumber>2.4.1.1</ecNumber>
    </recommendedName>
    <alternativeName>
        <fullName>Starch phosphorylase H</fullName>
    </alternativeName>
</protein>
<name>PHSH_WHEAT</name>
<sequence length="832" mass="93612">MSAADKVKPAASPASEDPSAIAGNISYHAQYSPHFSPLAFGPEQAFYATAESVRDHLLQRWNDTYLHFHKTDPKQTYYLSMEYLQGRALTNAVGNLAITGAYADALKKFGYELEAIAGQERDAALGNGGLGRLASCFLDSMATLNLPSWGYGLRYRYGLFKQRIAKEGQEEIAEDWLDKFSPWEIVRHDVVYPIRFFGHVEISPDGKRKWAGGEVLNALAYDVPIPGYKTKNAISLRLWDATATAEDFNLFQFNDGQYESAAQLHSRAQQICAVLYPGDATEEGKLLRLKQQYFLCSASLQDIIFRFKERKADRVSGKWSEFPSKVAVQMNDTHPTLAIPELMRLLMDVEGLGWDEAWAVTNKTVAYTNHTVLPEALEKWSQAVMKKLLPRHMEIIEEIDKRFREMVISTRKDMEGKIESMRVLDNNPEKPVVRMANLCVVAGHTVNGVAELHSNILKQELFADYVSIWPNKFQNKTNGITPRRWLRFCNPELSEIVTKWLKTDQWTSNLDLLTGLRKFADDEKLHAEWAAAKLASKKRLAKHVLDVTGVTIDPDSLFDIQIKRIHEYKRQLMNILGAVYRYKKLKEMSAADRQKVTPRTVMVGGKAFATYTNAKRIVKLVNDVGAVVNNDADVNKYLKVVFIPNYNVSVAEVLIPGSELSQHISTAGMEASGTSNMKFSLNGCVIIGTLDGANVEIREEVGQDNFFLFGAKADQVAGLRKDRENGLFKPDPRFEEAKQFIRSGAFGTYDYTPLLDSLEGNTGFGRGDYFLVGYDFPSYIDAQARVDEAYKDKKKWVKMSILNTAGSGKFSSDRTIDQYAKEIWGISACPVP</sequence>
<reference key="1">
    <citation type="submission" date="2000-06" db="EMBL/GenBank/DDBJ databases">
        <title>Full length clone of a cytosolic wheat leaf starch phosphorylase.</title>
        <authorList>
            <person name="Schupp N.T."/>
            <person name="Ziegler P."/>
            <person name="Huebsch S.D."/>
        </authorList>
    </citation>
    <scope>NUCLEOTIDE SEQUENCE [MRNA]</scope>
    <source>
        <strain>cv. Star</strain>
        <tissue>Leaf</tissue>
    </source>
</reference>
<evidence type="ECO:0000250" key="1"/>
<evidence type="ECO:0000305" key="2"/>
<accession>Q9LKJ3</accession>
<organism>
    <name type="scientific">Triticum aestivum</name>
    <name type="common">Wheat</name>
    <dbReference type="NCBI Taxonomy" id="4565"/>
    <lineage>
        <taxon>Eukaryota</taxon>
        <taxon>Viridiplantae</taxon>
        <taxon>Streptophyta</taxon>
        <taxon>Embryophyta</taxon>
        <taxon>Tracheophyta</taxon>
        <taxon>Spermatophyta</taxon>
        <taxon>Magnoliopsida</taxon>
        <taxon>Liliopsida</taxon>
        <taxon>Poales</taxon>
        <taxon>Poaceae</taxon>
        <taxon>BOP clade</taxon>
        <taxon>Pooideae</taxon>
        <taxon>Triticodae</taxon>
        <taxon>Triticeae</taxon>
        <taxon>Triticinae</taxon>
        <taxon>Triticum</taxon>
    </lineage>
</organism>
<feature type="chain" id="PRO_0000188543" description="Alpha-glucan phosphorylase, H isozyme">
    <location>
        <begin position="1"/>
        <end position="832"/>
    </location>
</feature>
<feature type="modified residue" description="N6-(pyridoxal phosphate)lysine" evidence="1">
    <location>
        <position position="678"/>
    </location>
</feature>
<dbReference type="EC" id="2.4.1.1"/>
<dbReference type="EMBL" id="AF275551">
    <property type="protein sequence ID" value="AAF82787.1"/>
    <property type="molecule type" value="mRNA"/>
</dbReference>
<dbReference type="SMR" id="Q9LKJ3"/>
<dbReference type="STRING" id="4565.Q9LKJ3"/>
<dbReference type="CAZy" id="GT35">
    <property type="family name" value="Glycosyltransferase Family 35"/>
</dbReference>
<dbReference type="PaxDb" id="4565-Traes_3DL_FFCCD5827.1"/>
<dbReference type="eggNOG" id="KOG2099">
    <property type="taxonomic scope" value="Eukaryota"/>
</dbReference>
<dbReference type="BRENDA" id="2.4.1.1">
    <property type="organism ID" value="6500"/>
</dbReference>
<dbReference type="Proteomes" id="UP000019116">
    <property type="component" value="Unplaced"/>
</dbReference>
<dbReference type="ExpressionAtlas" id="Q9LKJ3">
    <property type="expression patterns" value="baseline and differential"/>
</dbReference>
<dbReference type="GO" id="GO:0005737">
    <property type="term" value="C:cytoplasm"/>
    <property type="evidence" value="ECO:0000318"/>
    <property type="project" value="GO_Central"/>
</dbReference>
<dbReference type="GO" id="GO:0008184">
    <property type="term" value="F:glycogen phosphorylase activity"/>
    <property type="evidence" value="ECO:0000318"/>
    <property type="project" value="GO_Central"/>
</dbReference>
<dbReference type="GO" id="GO:0030170">
    <property type="term" value="F:pyridoxal phosphate binding"/>
    <property type="evidence" value="ECO:0000318"/>
    <property type="project" value="GO_Central"/>
</dbReference>
<dbReference type="GO" id="GO:0005980">
    <property type="term" value="P:glycogen catabolic process"/>
    <property type="evidence" value="ECO:0000318"/>
    <property type="project" value="GO_Central"/>
</dbReference>
<dbReference type="CDD" id="cd04300">
    <property type="entry name" value="GT35_Glycogen_Phosphorylase"/>
    <property type="match status" value="1"/>
</dbReference>
<dbReference type="FunFam" id="3.40.50.2000:FF:000002">
    <property type="entry name" value="Alpha-1,4 glucan phosphorylase"/>
    <property type="match status" value="1"/>
</dbReference>
<dbReference type="FunFam" id="3.40.50.2000:FF:000003">
    <property type="entry name" value="Alpha-1,4 glucan phosphorylase"/>
    <property type="match status" value="1"/>
</dbReference>
<dbReference type="Gene3D" id="3.40.50.2000">
    <property type="entry name" value="Glycogen Phosphorylase B"/>
    <property type="match status" value="2"/>
</dbReference>
<dbReference type="InterPro" id="IPR011833">
    <property type="entry name" value="Glycg_phsphrylas"/>
</dbReference>
<dbReference type="InterPro" id="IPR000811">
    <property type="entry name" value="Glyco_trans_35"/>
</dbReference>
<dbReference type="InterPro" id="IPR035090">
    <property type="entry name" value="Pyridoxal_P_attach_site"/>
</dbReference>
<dbReference type="NCBIfam" id="TIGR02093">
    <property type="entry name" value="P_ylase"/>
    <property type="match status" value="1"/>
</dbReference>
<dbReference type="PANTHER" id="PTHR11468:SF4">
    <property type="entry name" value="ALPHA-GLUCAN PHOSPHORYLASE 2, CYTOSOLIC"/>
    <property type="match status" value="1"/>
</dbReference>
<dbReference type="PANTHER" id="PTHR11468">
    <property type="entry name" value="GLYCOGEN PHOSPHORYLASE"/>
    <property type="match status" value="1"/>
</dbReference>
<dbReference type="Pfam" id="PF00343">
    <property type="entry name" value="Phosphorylase"/>
    <property type="match status" value="1"/>
</dbReference>
<dbReference type="PIRSF" id="PIRSF000460">
    <property type="entry name" value="Pprylas_GlgP"/>
    <property type="match status" value="1"/>
</dbReference>
<dbReference type="SUPFAM" id="SSF53756">
    <property type="entry name" value="UDP-Glycosyltransferase/glycogen phosphorylase"/>
    <property type="match status" value="1"/>
</dbReference>
<dbReference type="PROSITE" id="PS00102">
    <property type="entry name" value="PHOSPHORYLASE"/>
    <property type="match status" value="1"/>
</dbReference>
<comment type="function">
    <text evidence="1">Phosphorylase is an important allosteric enzyme in carbohydrate metabolism. Enzymes from different sources differ in their regulatory mechanisms and in their natural substrates. However, all known phosphorylases share catalytic and structural properties (By similarity).</text>
</comment>
<comment type="catalytic activity">
    <reaction>
        <text>[(1-&gt;4)-alpha-D-glucosyl](n) + phosphate = [(1-&gt;4)-alpha-D-glucosyl](n-1) + alpha-D-glucose 1-phosphate</text>
        <dbReference type="Rhea" id="RHEA:41732"/>
        <dbReference type="Rhea" id="RHEA-COMP:9584"/>
        <dbReference type="Rhea" id="RHEA-COMP:9586"/>
        <dbReference type="ChEBI" id="CHEBI:15444"/>
        <dbReference type="ChEBI" id="CHEBI:43474"/>
        <dbReference type="ChEBI" id="CHEBI:58601"/>
        <dbReference type="EC" id="2.4.1.1"/>
    </reaction>
</comment>
<comment type="cofactor">
    <cofactor>
        <name>pyridoxal 5'-phosphate</name>
        <dbReference type="ChEBI" id="CHEBI:597326"/>
    </cofactor>
</comment>
<comment type="subcellular location">
    <subcellularLocation>
        <location evidence="1">Cytoplasm</location>
    </subcellularLocation>
</comment>
<comment type="similarity">
    <text evidence="2">Belongs to the glycogen phosphorylase family.</text>
</comment>
<keyword id="KW-0021">Allosteric enzyme</keyword>
<keyword id="KW-0119">Carbohydrate metabolism</keyword>
<keyword id="KW-0963">Cytoplasm</keyword>
<keyword id="KW-0328">Glycosyltransferase</keyword>
<keyword id="KW-0663">Pyridoxal phosphate</keyword>
<keyword id="KW-1185">Reference proteome</keyword>
<keyword id="KW-0808">Transferase</keyword>
<proteinExistence type="evidence at transcript level"/>